<organism>
    <name type="scientific">Haloarcula marismortui (strain ATCC 43049 / DSM 3752 / JCM 8966 / VKM B-1809)</name>
    <name type="common">Halobacterium marismortui</name>
    <dbReference type="NCBI Taxonomy" id="272569"/>
    <lineage>
        <taxon>Archaea</taxon>
        <taxon>Methanobacteriati</taxon>
        <taxon>Methanobacteriota</taxon>
        <taxon>Stenosarchaea group</taxon>
        <taxon>Halobacteria</taxon>
        <taxon>Halobacteriales</taxon>
        <taxon>Haloarculaceae</taxon>
        <taxon>Haloarcula</taxon>
    </lineage>
</organism>
<evidence type="ECO:0000255" key="1">
    <source>
        <dbReference type="HAMAP-Rule" id="MF_01909"/>
    </source>
</evidence>
<name>TFE_HALMA</name>
<dbReference type="EMBL" id="AY596297">
    <property type="protein sequence ID" value="AAV45842.1"/>
    <property type="molecule type" value="Genomic_DNA"/>
</dbReference>
<dbReference type="RefSeq" id="WP_004961418.1">
    <property type="nucleotide sequence ID" value="NZ_CP039138.1"/>
</dbReference>
<dbReference type="SMR" id="Q5V3R0"/>
<dbReference type="STRING" id="272569.rrnAC0861"/>
<dbReference type="PaxDb" id="272569-rrnAC0861"/>
<dbReference type="EnsemblBacteria" id="AAV45842">
    <property type="protein sequence ID" value="AAV45842"/>
    <property type="gene ID" value="rrnAC0861"/>
</dbReference>
<dbReference type="GeneID" id="64822484"/>
<dbReference type="KEGG" id="hma:rrnAC0861"/>
<dbReference type="PATRIC" id="fig|272569.17.peg.1600"/>
<dbReference type="eggNOG" id="arCOG04270">
    <property type="taxonomic scope" value="Archaea"/>
</dbReference>
<dbReference type="HOGENOM" id="CLU_100097_0_0_2"/>
<dbReference type="Proteomes" id="UP000001169">
    <property type="component" value="Chromosome I"/>
</dbReference>
<dbReference type="GO" id="GO:0003677">
    <property type="term" value="F:DNA binding"/>
    <property type="evidence" value="ECO:0007669"/>
    <property type="project" value="UniProtKB-KW"/>
</dbReference>
<dbReference type="GO" id="GO:0006355">
    <property type="term" value="P:regulation of DNA-templated transcription"/>
    <property type="evidence" value="ECO:0007669"/>
    <property type="project" value="InterPro"/>
</dbReference>
<dbReference type="GO" id="GO:0006367">
    <property type="term" value="P:transcription initiation at RNA polymerase II promoter"/>
    <property type="evidence" value="ECO:0007669"/>
    <property type="project" value="InterPro"/>
</dbReference>
<dbReference type="FunFam" id="1.10.10.10:FF:000264">
    <property type="entry name" value="Transcription factor E"/>
    <property type="match status" value="1"/>
</dbReference>
<dbReference type="Gene3D" id="2.20.28.30">
    <property type="entry name" value="RNA polymerase ii, chain L"/>
    <property type="match status" value="1"/>
</dbReference>
<dbReference type="Gene3D" id="1.10.10.10">
    <property type="entry name" value="Winged helix-like DNA-binding domain superfamily/Winged helix DNA-binding domain"/>
    <property type="match status" value="1"/>
</dbReference>
<dbReference type="HAMAP" id="MF_01909">
    <property type="entry name" value="TFE_arch"/>
    <property type="match status" value="1"/>
</dbReference>
<dbReference type="InterPro" id="IPR016481">
    <property type="entry name" value="TF_E_archaea"/>
</dbReference>
<dbReference type="InterPro" id="IPR039997">
    <property type="entry name" value="TFE"/>
</dbReference>
<dbReference type="InterPro" id="IPR017919">
    <property type="entry name" value="TFIIE/TFIIEa_HTH"/>
</dbReference>
<dbReference type="InterPro" id="IPR002853">
    <property type="entry name" value="TFIIE_asu"/>
</dbReference>
<dbReference type="InterPro" id="IPR024550">
    <property type="entry name" value="TFIIEa/SarR/Rpc3_HTH_dom"/>
</dbReference>
<dbReference type="InterPro" id="IPR036388">
    <property type="entry name" value="WH-like_DNA-bd_sf"/>
</dbReference>
<dbReference type="InterPro" id="IPR036390">
    <property type="entry name" value="WH_DNA-bd_sf"/>
</dbReference>
<dbReference type="NCBIfam" id="TIGR00373">
    <property type="entry name" value="transcription factor E"/>
    <property type="match status" value="1"/>
</dbReference>
<dbReference type="PANTHER" id="PTHR13097:SF7">
    <property type="entry name" value="GENERAL TRANSCRIPTION FACTOR IIE SUBUNIT 1"/>
    <property type="match status" value="1"/>
</dbReference>
<dbReference type="PANTHER" id="PTHR13097">
    <property type="entry name" value="TRANSCRIPTION INITIATION FACTOR IIE, ALPHA SUBUNIT"/>
    <property type="match status" value="1"/>
</dbReference>
<dbReference type="Pfam" id="PF02002">
    <property type="entry name" value="TFIIE_alpha"/>
    <property type="match status" value="1"/>
</dbReference>
<dbReference type="PIRSF" id="PIRSF006373">
    <property type="entry name" value="TF_E_archaea"/>
    <property type="match status" value="1"/>
</dbReference>
<dbReference type="SMART" id="SM00531">
    <property type="entry name" value="TFIIE"/>
    <property type="match status" value="1"/>
</dbReference>
<dbReference type="SUPFAM" id="SSF46785">
    <property type="entry name" value="Winged helix' DNA-binding domain"/>
    <property type="match status" value="1"/>
</dbReference>
<dbReference type="PROSITE" id="PS51344">
    <property type="entry name" value="HTH_TFE_IIE"/>
    <property type="match status" value="1"/>
</dbReference>
<proteinExistence type="inferred from homology"/>
<reference key="1">
    <citation type="journal article" date="2004" name="Genome Res.">
        <title>Genome sequence of Haloarcula marismortui: a halophilic archaeon from the Dead Sea.</title>
        <authorList>
            <person name="Baliga N.S."/>
            <person name="Bonneau R."/>
            <person name="Facciotti M.T."/>
            <person name="Pan M."/>
            <person name="Glusman G."/>
            <person name="Deutsch E.W."/>
            <person name="Shannon P."/>
            <person name="Chiu Y."/>
            <person name="Weng R.S."/>
            <person name="Gan R.R."/>
            <person name="Hung P."/>
            <person name="Date S.V."/>
            <person name="Marcotte E."/>
            <person name="Hood L."/>
            <person name="Ng W.V."/>
        </authorList>
    </citation>
    <scope>NUCLEOTIDE SEQUENCE [LARGE SCALE GENOMIC DNA]</scope>
    <source>
        <strain>ATCC 43049 / DSM 3752 / JCM 8966 / VKM B-1809</strain>
    </source>
</reference>
<protein>
    <recommendedName>
        <fullName evidence="1">Transcription factor E</fullName>
        <shortName evidence="1">TFE</shortName>
    </recommendedName>
    <alternativeName>
        <fullName evidence="1">TFIIE subunit alpha homolog</fullName>
    </alternativeName>
    <alternativeName>
        <fullName evidence="1">Transcription initiation factor TFIIE</fullName>
    </alternativeName>
</protein>
<comment type="function">
    <text evidence="1">Transcription factor that plays a role in the activation of archaeal genes transcribed by RNA polymerase. Facilitates transcription initiation by enhancing TATA-box recognition by TATA-box-binding protein (Tbp), and transcription factor B (Tfb) and RNA polymerase recruitment. Not absolutely required for transcription in vitro, but particularly important in cases where Tbp or Tfb function is not optimal. It dynamically alters the nucleic acid-binding properties of RNA polymerases by stabilizing the initiation complex and destabilizing elongation complexes. Seems to translocate with the RNA polymerase following initiation and acts by binding to the non template strand of the transcription bubble in elongation complexes.</text>
</comment>
<comment type="subunit">
    <text evidence="1">Monomer. Interaction with RNA polymerase subunits RpoF and RpoE is necessary for Tfe stimulatory transcription activity. Able to interact with Tbp and RNA polymerase in the absence of DNA promoter. Interacts both with the preinitiation and elongation complexes.</text>
</comment>
<comment type="domain">
    <text evidence="1">The winged helix domain is involved in binding to DNA in the preinitiation complex.</text>
</comment>
<comment type="similarity">
    <text evidence="1">Belongs to the TFE family.</text>
</comment>
<accession>Q5V3R0</accession>
<keyword id="KW-0238">DNA-binding</keyword>
<keyword id="KW-1185">Reference proteome</keyword>
<keyword id="KW-0804">Transcription</keyword>
<keyword id="KW-0805">Transcription regulation</keyword>
<feature type="chain" id="PRO_0000326590" description="Transcription factor E">
    <location>
        <begin position="1"/>
        <end position="176"/>
    </location>
</feature>
<feature type="domain" description="HTH TFE/IIEalpha-type" evidence="1">
    <location>
        <begin position="8"/>
        <end position="90"/>
    </location>
</feature>
<sequence length="176" mass="20735">MAFEELLEDPVIQKYLHELVGPKGMPVAAAPPDGEVTDEELAEELGLELNDVRRALFILYENDLATYRRLRDEDSGWLTYLWTFQYEKIPEQLQEEMHRLLDGLEERREYERENEFYLCEHCGIRFEFGEAMEFGFECPECGNQVETMENTRLVTAMENRLEELRDELNADVDVEA</sequence>
<gene>
    <name evidence="1" type="primary">tfe</name>
    <name type="ordered locus">rrnAC0861</name>
</gene>